<gene>
    <name type="ordered locus">MPN_513</name>
    <name type="ORF">F04_orf150</name>
    <name type="ORF">MP329</name>
</gene>
<dbReference type="EMBL" id="U00089">
    <property type="protein sequence ID" value="AAB95977.1"/>
    <property type="molecule type" value="Genomic_DNA"/>
</dbReference>
<dbReference type="PIR" id="S73655">
    <property type="entry name" value="S73655"/>
</dbReference>
<dbReference type="RefSeq" id="NP_110201.1">
    <property type="nucleotide sequence ID" value="NC_000912.1"/>
</dbReference>
<dbReference type="RefSeq" id="WP_010874869.1">
    <property type="nucleotide sequence ID" value="NZ_OU342337.1"/>
</dbReference>
<dbReference type="SMR" id="P75273"/>
<dbReference type="STRING" id="272634.MPN_513"/>
<dbReference type="EnsemblBacteria" id="AAB95977">
    <property type="protein sequence ID" value="AAB95977"/>
    <property type="gene ID" value="MPN_513"/>
</dbReference>
<dbReference type="KEGG" id="mpn:MPN_513"/>
<dbReference type="PATRIC" id="fig|272634.6.peg.565"/>
<dbReference type="HOGENOM" id="CLU_1766002_0_0_14"/>
<dbReference type="BioCyc" id="MPNE272634:G1GJ3-842-MONOMER"/>
<dbReference type="Proteomes" id="UP000000808">
    <property type="component" value="Chromosome"/>
</dbReference>
<dbReference type="Gene3D" id="3.40.50.300">
    <property type="entry name" value="P-loop containing nucleotide triphosphate hydrolases"/>
    <property type="match status" value="1"/>
</dbReference>
<dbReference type="InterPro" id="IPR027417">
    <property type="entry name" value="P-loop_NTPase"/>
</dbReference>
<dbReference type="InterPro" id="IPR019476">
    <property type="entry name" value="T4SS_TraD_DNA-bd"/>
</dbReference>
<dbReference type="Pfam" id="PF10412">
    <property type="entry name" value="TrwB_AAD_bind"/>
    <property type="match status" value="1"/>
</dbReference>
<dbReference type="SUPFAM" id="SSF52540">
    <property type="entry name" value="P-loop containing nucleoside triphosphate hydrolases"/>
    <property type="match status" value="1"/>
</dbReference>
<proteinExistence type="predicted"/>
<protein>
    <recommendedName>
        <fullName>Uncharacterized protein MPN_513</fullName>
    </recommendedName>
</protein>
<sequence>MYDMINAKYLGKLIFLDFGQTITSLEETSDNSTFFIADEFGNFGSHYVGVVLEQVRSFNTVVILSYQSFANLRNIGGDNFKSQIINNTSTLIAHRLIDMMEAEEVANLYGVDITCASEIKSLKVGQALVRSISSYYGEIKDWLVQQIDKS</sequence>
<organism>
    <name type="scientific">Mycoplasma pneumoniae (strain ATCC 29342 / M129 / Subtype 1)</name>
    <name type="common">Mycoplasmoides pneumoniae</name>
    <dbReference type="NCBI Taxonomy" id="272634"/>
    <lineage>
        <taxon>Bacteria</taxon>
        <taxon>Bacillati</taxon>
        <taxon>Mycoplasmatota</taxon>
        <taxon>Mycoplasmoidales</taxon>
        <taxon>Mycoplasmoidaceae</taxon>
        <taxon>Mycoplasmoides</taxon>
    </lineage>
</organism>
<name>Y513_MYCPN</name>
<reference key="1">
    <citation type="journal article" date="1996" name="Nucleic Acids Res.">
        <title>Complete sequence analysis of the genome of the bacterium Mycoplasma pneumoniae.</title>
        <authorList>
            <person name="Himmelreich R."/>
            <person name="Hilbert H."/>
            <person name="Plagens H."/>
            <person name="Pirkl E."/>
            <person name="Li B.-C."/>
            <person name="Herrmann R."/>
        </authorList>
    </citation>
    <scope>NUCLEOTIDE SEQUENCE [LARGE SCALE GENOMIC DNA]</scope>
    <source>
        <strain>ATCC 29342 / M129 / Subtype 1</strain>
    </source>
</reference>
<keyword id="KW-1185">Reference proteome</keyword>
<accession>P75273</accession>
<feature type="chain" id="PRO_0000210691" description="Uncharacterized protein MPN_513">
    <location>
        <begin position="1"/>
        <end position="150"/>
    </location>
</feature>